<reference key="1">
    <citation type="journal article" date="2007" name="PLoS ONE">
        <title>Genome sequencing shows that European isolates of Francisella tularensis subspecies tularensis are almost identical to US laboratory strain Schu S4.</title>
        <authorList>
            <person name="Chaudhuri R.R."/>
            <person name="Ren C.-P."/>
            <person name="Desmond L."/>
            <person name="Vincent G.A."/>
            <person name="Silman N.J."/>
            <person name="Brehm J.K."/>
            <person name="Elmore M.J."/>
            <person name="Hudson M.J."/>
            <person name="Forsman M."/>
            <person name="Isherwood K.E."/>
            <person name="Gurycova D."/>
            <person name="Minton N.P."/>
            <person name="Titball R.W."/>
            <person name="Pallen M.J."/>
            <person name="Vipond R."/>
        </authorList>
    </citation>
    <scope>NUCLEOTIDE SEQUENCE [LARGE SCALE GENOMIC DNA]</scope>
    <source>
        <strain>FSC 198</strain>
    </source>
</reference>
<keyword id="KW-0413">Isomerase</keyword>
<keyword id="KW-0663">Pyridoxal phosphate</keyword>
<protein>
    <recommendedName>
        <fullName evidence="1">Alanine racemase</fullName>
        <ecNumber evidence="1">5.1.1.1</ecNumber>
    </recommendedName>
</protein>
<sequence length="365" mass="41491">MNILKISKQTLRNNIKIIREYIGNAKMCFPVKANAYGHGIEDIVENTHDLVDFFAVANSLEAFRVTAVAKNPVLVFGVIYYEYIEKMISENIRVSIQDYEDIEKLEQIAKELDKKVYAHININTGMNRMGVDYNDACRTIQRAYESDWLILEGVYSHLACADNRDHPTNIKQKNRFDSIVKFTKGLSQDIICHLSNSYGFLGQKGICYDMVRPGILSYGFLPEFYVDRVIREIKPIARLLSKVVKIITLQEGEGVGYSLIYRGFEDEQLAVIPIGYGDGFPRELGDRGFVNINDVMYPMAGRMSMDGLTVSLGINEYDVKVGDTVELISAIPRNRNSAFSIAKQTNTIEYDIMSTLNDRIIRKII</sequence>
<proteinExistence type="inferred from homology"/>
<organism>
    <name type="scientific">Francisella tularensis subsp. tularensis (strain FSC 198)</name>
    <dbReference type="NCBI Taxonomy" id="393115"/>
    <lineage>
        <taxon>Bacteria</taxon>
        <taxon>Pseudomonadati</taxon>
        <taxon>Pseudomonadota</taxon>
        <taxon>Gammaproteobacteria</taxon>
        <taxon>Thiotrichales</taxon>
        <taxon>Francisellaceae</taxon>
        <taxon>Francisella</taxon>
    </lineage>
</organism>
<gene>
    <name type="primary">alr</name>
    <name type="ordered locus">FTF0573</name>
</gene>
<dbReference type="EC" id="5.1.1.1" evidence="1"/>
<dbReference type="EMBL" id="AM286280">
    <property type="protein sequence ID" value="CAL08589.1"/>
    <property type="molecule type" value="Genomic_DNA"/>
</dbReference>
<dbReference type="RefSeq" id="WP_003029065.1">
    <property type="nucleotide sequence ID" value="NC_008245.1"/>
</dbReference>
<dbReference type="SMR" id="Q14IP6"/>
<dbReference type="KEGG" id="ftf:FTF0573"/>
<dbReference type="HOGENOM" id="CLU_028393_2_2_6"/>
<dbReference type="UniPathway" id="UPA00042">
    <property type="reaction ID" value="UER00497"/>
</dbReference>
<dbReference type="GO" id="GO:0005829">
    <property type="term" value="C:cytosol"/>
    <property type="evidence" value="ECO:0007669"/>
    <property type="project" value="TreeGrafter"/>
</dbReference>
<dbReference type="GO" id="GO:0008784">
    <property type="term" value="F:alanine racemase activity"/>
    <property type="evidence" value="ECO:0007669"/>
    <property type="project" value="UniProtKB-UniRule"/>
</dbReference>
<dbReference type="GO" id="GO:0030170">
    <property type="term" value="F:pyridoxal phosphate binding"/>
    <property type="evidence" value="ECO:0007669"/>
    <property type="project" value="UniProtKB-UniRule"/>
</dbReference>
<dbReference type="GO" id="GO:0030632">
    <property type="term" value="P:D-alanine biosynthetic process"/>
    <property type="evidence" value="ECO:0007669"/>
    <property type="project" value="UniProtKB-UniRule"/>
</dbReference>
<dbReference type="CDD" id="cd00430">
    <property type="entry name" value="PLPDE_III_AR"/>
    <property type="match status" value="1"/>
</dbReference>
<dbReference type="FunFam" id="3.20.20.10:FF:000002">
    <property type="entry name" value="Alanine racemase"/>
    <property type="match status" value="1"/>
</dbReference>
<dbReference type="Gene3D" id="3.20.20.10">
    <property type="entry name" value="Alanine racemase"/>
    <property type="match status" value="1"/>
</dbReference>
<dbReference type="Gene3D" id="2.40.37.10">
    <property type="entry name" value="Lyase, Ornithine Decarboxylase, Chain A, domain 1"/>
    <property type="match status" value="1"/>
</dbReference>
<dbReference type="HAMAP" id="MF_01201">
    <property type="entry name" value="Ala_racemase"/>
    <property type="match status" value="1"/>
</dbReference>
<dbReference type="InterPro" id="IPR000821">
    <property type="entry name" value="Ala_racemase"/>
</dbReference>
<dbReference type="InterPro" id="IPR009006">
    <property type="entry name" value="Ala_racemase/Decarboxylase_C"/>
</dbReference>
<dbReference type="InterPro" id="IPR011079">
    <property type="entry name" value="Ala_racemase_C"/>
</dbReference>
<dbReference type="InterPro" id="IPR001608">
    <property type="entry name" value="Ala_racemase_N"/>
</dbReference>
<dbReference type="InterPro" id="IPR029066">
    <property type="entry name" value="PLP-binding_barrel"/>
</dbReference>
<dbReference type="NCBIfam" id="TIGR00492">
    <property type="entry name" value="alr"/>
    <property type="match status" value="1"/>
</dbReference>
<dbReference type="PANTHER" id="PTHR30511">
    <property type="entry name" value="ALANINE RACEMASE"/>
    <property type="match status" value="1"/>
</dbReference>
<dbReference type="PANTHER" id="PTHR30511:SF0">
    <property type="entry name" value="ALANINE RACEMASE, CATABOLIC-RELATED"/>
    <property type="match status" value="1"/>
</dbReference>
<dbReference type="Pfam" id="PF00842">
    <property type="entry name" value="Ala_racemase_C"/>
    <property type="match status" value="1"/>
</dbReference>
<dbReference type="Pfam" id="PF01168">
    <property type="entry name" value="Ala_racemase_N"/>
    <property type="match status" value="1"/>
</dbReference>
<dbReference type="PRINTS" id="PR00992">
    <property type="entry name" value="ALARACEMASE"/>
</dbReference>
<dbReference type="SMART" id="SM01005">
    <property type="entry name" value="Ala_racemase_C"/>
    <property type="match status" value="1"/>
</dbReference>
<dbReference type="SUPFAM" id="SSF50621">
    <property type="entry name" value="Alanine racemase C-terminal domain-like"/>
    <property type="match status" value="1"/>
</dbReference>
<dbReference type="SUPFAM" id="SSF51419">
    <property type="entry name" value="PLP-binding barrel"/>
    <property type="match status" value="1"/>
</dbReference>
<comment type="function">
    <text evidence="1">Catalyzes the interconversion of L-alanine and D-alanine. May also act on other amino acids.</text>
</comment>
<comment type="catalytic activity">
    <reaction evidence="1">
        <text>L-alanine = D-alanine</text>
        <dbReference type="Rhea" id="RHEA:20249"/>
        <dbReference type="ChEBI" id="CHEBI:57416"/>
        <dbReference type="ChEBI" id="CHEBI:57972"/>
        <dbReference type="EC" id="5.1.1.1"/>
    </reaction>
</comment>
<comment type="cofactor">
    <cofactor evidence="1">
        <name>pyridoxal 5'-phosphate</name>
        <dbReference type="ChEBI" id="CHEBI:597326"/>
    </cofactor>
</comment>
<comment type="pathway">
    <text evidence="1">Amino-acid biosynthesis; D-alanine biosynthesis; D-alanine from L-alanine: step 1/1.</text>
</comment>
<comment type="similarity">
    <text evidence="1">Belongs to the alanine racemase family.</text>
</comment>
<name>ALR_FRAT1</name>
<accession>Q14IP6</accession>
<feature type="chain" id="PRO_1000073093" description="Alanine racemase">
    <location>
        <begin position="1"/>
        <end position="365"/>
    </location>
</feature>
<feature type="active site" description="Proton acceptor; specific for D-alanine" evidence="1">
    <location>
        <position position="32"/>
    </location>
</feature>
<feature type="active site" description="Proton acceptor; specific for L-alanine" evidence="1">
    <location>
        <position position="257"/>
    </location>
</feature>
<feature type="binding site" evidence="1">
    <location>
        <position position="128"/>
    </location>
    <ligand>
        <name>substrate</name>
    </ligand>
</feature>
<feature type="binding site" evidence="1">
    <location>
        <position position="305"/>
    </location>
    <ligand>
        <name>substrate</name>
    </ligand>
</feature>
<feature type="modified residue" description="N6-(pyridoxal phosphate)lysine" evidence="1">
    <location>
        <position position="32"/>
    </location>
</feature>
<evidence type="ECO:0000255" key="1">
    <source>
        <dbReference type="HAMAP-Rule" id="MF_01201"/>
    </source>
</evidence>